<name>NTPPB_RALN1</name>
<reference key="1">
    <citation type="journal article" date="2002" name="Nature">
        <title>Genome sequence of the plant pathogen Ralstonia solanacearum.</title>
        <authorList>
            <person name="Salanoubat M."/>
            <person name="Genin S."/>
            <person name="Artiguenave F."/>
            <person name="Gouzy J."/>
            <person name="Mangenot S."/>
            <person name="Arlat M."/>
            <person name="Billault A."/>
            <person name="Brottier P."/>
            <person name="Camus J.-C."/>
            <person name="Cattolico L."/>
            <person name="Chandler M."/>
            <person name="Choisne N."/>
            <person name="Claudel-Renard C."/>
            <person name="Cunnac S."/>
            <person name="Demange N."/>
            <person name="Gaspin C."/>
            <person name="Lavie M."/>
            <person name="Moisan A."/>
            <person name="Robert C."/>
            <person name="Saurin W."/>
            <person name="Schiex T."/>
            <person name="Siguier P."/>
            <person name="Thebault P."/>
            <person name="Whalen M."/>
            <person name="Wincker P."/>
            <person name="Levy M."/>
            <person name="Weissenbach J."/>
            <person name="Boucher C.A."/>
        </authorList>
    </citation>
    <scope>NUCLEOTIDE SEQUENCE [LARGE SCALE GENOMIC DNA]</scope>
    <source>
        <strain>ATCC BAA-1114 / GMI1000</strain>
    </source>
</reference>
<proteinExistence type="inferred from homology"/>
<organism>
    <name type="scientific">Ralstonia nicotianae (strain ATCC BAA-1114 / GMI1000)</name>
    <name type="common">Ralstonia solanacearum</name>
    <dbReference type="NCBI Taxonomy" id="267608"/>
    <lineage>
        <taxon>Bacteria</taxon>
        <taxon>Pseudomonadati</taxon>
        <taxon>Pseudomonadota</taxon>
        <taxon>Betaproteobacteria</taxon>
        <taxon>Burkholderiales</taxon>
        <taxon>Burkholderiaceae</taxon>
        <taxon>Ralstonia</taxon>
        <taxon>Ralstonia solanacearum species complex</taxon>
    </lineage>
</organism>
<feature type="chain" id="PRO_0000123050" description="7-methyl-GTP pyrophosphatase">
    <location>
        <begin position="1"/>
        <end position="194"/>
    </location>
</feature>
<feature type="active site" description="Proton acceptor" evidence="1">
    <location>
        <position position="70"/>
    </location>
</feature>
<feature type="site" description="Important for substrate specificity" evidence="1">
    <location>
        <position position="13"/>
    </location>
</feature>
<feature type="site" description="Important for substrate specificity" evidence="1">
    <location>
        <position position="71"/>
    </location>
</feature>
<feature type="site" description="Important for substrate specificity" evidence="1">
    <location>
        <position position="155"/>
    </location>
</feature>
<dbReference type="EC" id="3.6.1.-" evidence="1"/>
<dbReference type="EMBL" id="AL646052">
    <property type="protein sequence ID" value="CAD14748.1"/>
    <property type="molecule type" value="Genomic_DNA"/>
</dbReference>
<dbReference type="SMR" id="P58633"/>
<dbReference type="STRING" id="267608.RSc1046"/>
<dbReference type="EnsemblBacteria" id="CAD14748">
    <property type="protein sequence ID" value="CAD14748"/>
    <property type="gene ID" value="RSc1046"/>
</dbReference>
<dbReference type="KEGG" id="rso:RSc1046"/>
<dbReference type="eggNOG" id="COG0424">
    <property type="taxonomic scope" value="Bacteria"/>
</dbReference>
<dbReference type="HOGENOM" id="CLU_040416_1_0_4"/>
<dbReference type="Proteomes" id="UP000001436">
    <property type="component" value="Chromosome"/>
</dbReference>
<dbReference type="GO" id="GO:0005737">
    <property type="term" value="C:cytoplasm"/>
    <property type="evidence" value="ECO:0007669"/>
    <property type="project" value="UniProtKB-SubCell"/>
</dbReference>
<dbReference type="GO" id="GO:0047429">
    <property type="term" value="F:nucleoside triphosphate diphosphatase activity"/>
    <property type="evidence" value="ECO:0007669"/>
    <property type="project" value="InterPro"/>
</dbReference>
<dbReference type="GO" id="GO:0009117">
    <property type="term" value="P:nucleotide metabolic process"/>
    <property type="evidence" value="ECO:0007669"/>
    <property type="project" value="UniProtKB-KW"/>
</dbReference>
<dbReference type="CDD" id="cd00555">
    <property type="entry name" value="Maf"/>
    <property type="match status" value="1"/>
</dbReference>
<dbReference type="Gene3D" id="3.90.950.10">
    <property type="match status" value="1"/>
</dbReference>
<dbReference type="HAMAP" id="MF_00528">
    <property type="entry name" value="Maf"/>
    <property type="match status" value="1"/>
</dbReference>
<dbReference type="InterPro" id="IPR029001">
    <property type="entry name" value="ITPase-like_fam"/>
</dbReference>
<dbReference type="InterPro" id="IPR003697">
    <property type="entry name" value="Maf-like"/>
</dbReference>
<dbReference type="NCBIfam" id="TIGR00172">
    <property type="entry name" value="maf"/>
    <property type="match status" value="1"/>
</dbReference>
<dbReference type="PANTHER" id="PTHR43213">
    <property type="entry name" value="BIFUNCTIONAL DTTP/UTP PYROPHOSPHATASE/METHYLTRANSFERASE PROTEIN-RELATED"/>
    <property type="match status" value="1"/>
</dbReference>
<dbReference type="PANTHER" id="PTHR43213:SF5">
    <property type="entry name" value="BIFUNCTIONAL DTTP_UTP PYROPHOSPHATASE_METHYLTRANSFERASE PROTEIN-RELATED"/>
    <property type="match status" value="1"/>
</dbReference>
<dbReference type="Pfam" id="PF02545">
    <property type="entry name" value="Maf"/>
    <property type="match status" value="1"/>
</dbReference>
<dbReference type="PIRSF" id="PIRSF006305">
    <property type="entry name" value="Maf"/>
    <property type="match status" value="1"/>
</dbReference>
<dbReference type="SUPFAM" id="SSF52972">
    <property type="entry name" value="ITPase-like"/>
    <property type="match status" value="1"/>
</dbReference>
<accession>P58633</accession>
<gene>
    <name type="ordered locus">RSc1046</name>
    <name type="ORF">RS04204</name>
</gene>
<evidence type="ECO:0000255" key="1">
    <source>
        <dbReference type="HAMAP-Rule" id="MF_00528"/>
    </source>
</evidence>
<keyword id="KW-0963">Cytoplasm</keyword>
<keyword id="KW-0378">Hydrolase</keyword>
<keyword id="KW-0546">Nucleotide metabolism</keyword>
<keyword id="KW-1185">Reference proteome</keyword>
<protein>
    <recommendedName>
        <fullName evidence="1">7-methyl-GTP pyrophosphatase</fullName>
        <shortName evidence="1">m(7)GTP pyrophosphatase</shortName>
        <ecNumber evidence="1">3.6.1.-</ecNumber>
    </recommendedName>
</protein>
<sequence>MRPPLILASSSPYRRELLERLRLPFEIVVPAIDETPAPGESPDQTALRLARQKAEKVAAAHAGALVIGSDQVATLDGKQVGKPGDHARALAQLHWMRGRTVTFHSALCLYDGRTGQHQSEDVRTLATFRSLSDEELDAYLHLEHPYDVAGSAKSEGLGIALLERVESPDPTALVGLPLIALTTMLRNVHYPLFA</sequence>
<comment type="function">
    <text evidence="1">Nucleoside triphosphate pyrophosphatase that hydrolyzes 7-methyl-GTP (m(7)GTP). May have a dual role in cell division arrest and in preventing the incorporation of modified nucleotides into cellular nucleic acids.</text>
</comment>
<comment type="catalytic activity">
    <reaction evidence="1">
        <text>N(7)-methyl-GTP + H2O = N(7)-methyl-GMP + diphosphate + H(+)</text>
        <dbReference type="Rhea" id="RHEA:58744"/>
        <dbReference type="ChEBI" id="CHEBI:15377"/>
        <dbReference type="ChEBI" id="CHEBI:15378"/>
        <dbReference type="ChEBI" id="CHEBI:33019"/>
        <dbReference type="ChEBI" id="CHEBI:58285"/>
        <dbReference type="ChEBI" id="CHEBI:87133"/>
    </reaction>
</comment>
<comment type="cofactor">
    <cofactor evidence="1">
        <name>a divalent metal cation</name>
        <dbReference type="ChEBI" id="CHEBI:60240"/>
    </cofactor>
</comment>
<comment type="subcellular location">
    <subcellularLocation>
        <location evidence="1">Cytoplasm</location>
    </subcellularLocation>
</comment>
<comment type="similarity">
    <text evidence="1">Belongs to the Maf family. YceF subfamily.</text>
</comment>